<protein>
    <recommendedName>
        <fullName evidence="1">NADH-quinone oxidoreductase subunit H</fullName>
        <ecNumber evidence="1">7.1.1.-</ecNumber>
    </recommendedName>
    <alternativeName>
        <fullName evidence="1">NADH dehydrogenase I subunit H</fullName>
    </alternativeName>
    <alternativeName>
        <fullName evidence="1">NDH-1 subunit H</fullName>
    </alternativeName>
</protein>
<evidence type="ECO:0000255" key="1">
    <source>
        <dbReference type="HAMAP-Rule" id="MF_01350"/>
    </source>
</evidence>
<evidence type="ECO:0000269" key="2">
    <source>
    </source>
</evidence>
<evidence type="ECO:0000269" key="3">
    <source>
    </source>
</evidence>
<evidence type="ECO:0000269" key="4">
    <source ref="2"/>
</evidence>
<evidence type="ECO:0000305" key="5"/>
<comment type="function">
    <text>NDH-1 shuttles electrons from NADH, via FMN and iron-sulfur (Fe-S) centers, to quinones in the respiratory chain. The immediate electron acceptor for the enzyme in this species is believed to be ubiquinone. Couples the redox reaction to proton translocation (for every two electrons transferred, four hydrogen ions are translocated across the cytoplasmic membrane), and thus conserves the redox energy in a proton gradient. This subunit may bind ubiquinone.</text>
</comment>
<comment type="catalytic activity">
    <reaction evidence="1">
        <text>a quinone + NADH + 5 H(+)(in) = a quinol + NAD(+) + 4 H(+)(out)</text>
        <dbReference type="Rhea" id="RHEA:57888"/>
        <dbReference type="ChEBI" id="CHEBI:15378"/>
        <dbReference type="ChEBI" id="CHEBI:24646"/>
        <dbReference type="ChEBI" id="CHEBI:57540"/>
        <dbReference type="ChEBI" id="CHEBI:57945"/>
        <dbReference type="ChEBI" id="CHEBI:132124"/>
    </reaction>
</comment>
<comment type="subunit">
    <text evidence="5">NDH-1 is composed of 14 different subunits. Subunits NuoA, H, J, K, L, M, N constitute the membrane sector of the complex (Probable).</text>
</comment>
<comment type="subcellular location">
    <subcellularLocation>
        <location evidence="2 3">Cellular chromatophore membrane</location>
        <topology evidence="1 2 3">Multi-pass membrane protein</topology>
    </subcellularLocation>
</comment>
<comment type="disruption phenotype">
    <text evidence="4">No functional NADH-quinone oxidoreductase complex. Cells lacking this gene have a nearly normal respiratory growth phenotype on lactate, however they are unable to perform anaerobic photosynthesis. It is suggested that in R.capsulatus this complex may function in reverse flow under physiological conditions.</text>
</comment>
<comment type="similarity">
    <text evidence="1">Belongs to the complex I subunit 1 family.</text>
</comment>
<dbReference type="EC" id="7.1.1.-" evidence="1"/>
<dbReference type="EMBL" id="AF029365">
    <property type="protein sequence ID" value="AAC24997.1"/>
    <property type="molecule type" value="Genomic_DNA"/>
</dbReference>
<dbReference type="PIR" id="S22368">
    <property type="entry name" value="S22368"/>
</dbReference>
<dbReference type="RefSeq" id="WP_013067253.1">
    <property type="nucleotide sequence ID" value="NZ_JAOTPJ010000037.1"/>
</dbReference>
<dbReference type="SMR" id="P42032"/>
<dbReference type="GeneID" id="31490409"/>
<dbReference type="OMA" id="WSGWASN"/>
<dbReference type="GO" id="GO:0005886">
    <property type="term" value="C:plasma membrane"/>
    <property type="evidence" value="ECO:0007669"/>
    <property type="project" value="UniProtKB-UniRule"/>
</dbReference>
<dbReference type="GO" id="GO:0042717">
    <property type="term" value="C:plasma membrane-derived chromatophore membrane"/>
    <property type="evidence" value="ECO:0007669"/>
    <property type="project" value="UniProtKB-SubCell"/>
</dbReference>
<dbReference type="GO" id="GO:0003954">
    <property type="term" value="F:NADH dehydrogenase activity"/>
    <property type="evidence" value="ECO:0007669"/>
    <property type="project" value="TreeGrafter"/>
</dbReference>
<dbReference type="GO" id="GO:0016655">
    <property type="term" value="F:oxidoreductase activity, acting on NAD(P)H, quinone or similar compound as acceptor"/>
    <property type="evidence" value="ECO:0007669"/>
    <property type="project" value="UniProtKB-UniRule"/>
</dbReference>
<dbReference type="GO" id="GO:0048038">
    <property type="term" value="F:quinone binding"/>
    <property type="evidence" value="ECO:0007669"/>
    <property type="project" value="UniProtKB-KW"/>
</dbReference>
<dbReference type="GO" id="GO:0009060">
    <property type="term" value="P:aerobic respiration"/>
    <property type="evidence" value="ECO:0007669"/>
    <property type="project" value="TreeGrafter"/>
</dbReference>
<dbReference type="HAMAP" id="MF_01350">
    <property type="entry name" value="NDH1_NuoH"/>
    <property type="match status" value="1"/>
</dbReference>
<dbReference type="InterPro" id="IPR001694">
    <property type="entry name" value="NADH_UbQ_OxRdtase_su1/FPO"/>
</dbReference>
<dbReference type="InterPro" id="IPR018086">
    <property type="entry name" value="NADH_UbQ_OxRdtase_su1_CS"/>
</dbReference>
<dbReference type="NCBIfam" id="NF004741">
    <property type="entry name" value="PRK06076.1-2"/>
    <property type="match status" value="1"/>
</dbReference>
<dbReference type="NCBIfam" id="NF004745">
    <property type="entry name" value="PRK06076.1-6"/>
    <property type="match status" value="1"/>
</dbReference>
<dbReference type="PANTHER" id="PTHR11432">
    <property type="entry name" value="NADH DEHYDROGENASE SUBUNIT 1"/>
    <property type="match status" value="1"/>
</dbReference>
<dbReference type="PANTHER" id="PTHR11432:SF3">
    <property type="entry name" value="NADH-UBIQUINONE OXIDOREDUCTASE CHAIN 1"/>
    <property type="match status" value="1"/>
</dbReference>
<dbReference type="Pfam" id="PF00146">
    <property type="entry name" value="NADHdh"/>
    <property type="match status" value="1"/>
</dbReference>
<dbReference type="PROSITE" id="PS00667">
    <property type="entry name" value="COMPLEX1_ND1_1"/>
    <property type="match status" value="1"/>
</dbReference>
<dbReference type="PROSITE" id="PS00668">
    <property type="entry name" value="COMPLEX1_ND1_2"/>
    <property type="match status" value="1"/>
</dbReference>
<proteinExistence type="evidence at protein level"/>
<gene>
    <name evidence="1" type="primary">nuoH</name>
    <name type="synonym">ndhA</name>
</gene>
<sequence length="345" mass="37852">MADFWATSLGQTLILLAQGLGIIAFVMIGLLLLVWGDRKIWAAVQMRKGPNVVGAFGLLQSVADAAKYVFKEIVVPAGVDKPVYFLAPMLSLVLALLAWVVVPFNEGWVMADINVAVLFVFAVSSLEVYGVIMGGWASNSKYPFLGSLRSAAQMISYEVSMGLIIVGVIISTGSMNLSAIVEAQRGDFGLLNWYWLPHLPMVALFFISALAETNRPPFDLPEAESELVAGFMVEYSSTPYLLFMAGEYIAVWLMCALTSVLFFGGWLSPIPGVPDGVLWMVAKMAAVFFVFAMVKAIVPRYRYDQLMRIGWKVFLPLSLAWVVVVAFLAKFEVLGGFWARWSIGA</sequence>
<reference key="1">
    <citation type="journal article" date="1992" name="FEBS Lett.">
        <title>Identification of two genes of Rhodobacter capsulatus coding for proteins homologous to the ND1 and 23 kDa subunits of the mitochondrial Complex I.</title>
        <authorList>
            <person name="Dupuis A."/>
        </authorList>
    </citation>
    <scope>NUCLEOTIDE SEQUENCE [GENOMIC DNA]</scope>
    <source>
        <strain>ATCC 33303 / B10</strain>
    </source>
</reference>
<reference key="2">
    <citation type="journal article" date="1997" name="FEMS Microbiol. Lett.">
        <title>Genetic disruption of the respiratory NADH-ubiquinone reductase of Rhodobacter capsulatus leads to an unexpected photosynthesis-negative phenotype.</title>
        <authorList>
            <person name="Dupuis A."/>
            <person name="Peinnequin A."/>
            <person name="Darrouzet E."/>
            <person name="Lunardi J."/>
        </authorList>
    </citation>
    <scope>DISRUPTION PHENOTYPE</scope>
    <source>
        <strain>ATCC 33303 / B10</strain>
    </source>
</reference>
<reference key="3">
    <citation type="journal article" date="1998" name="Mol. Microbiol.">
        <title>Distal genes of the nuo operon of Rhodobacter capsulatus equivalent to the mitochondrial ND subunits are all essential for the biogenesis of the respiratory NADH-ubiquinone oxidoreductase.</title>
        <authorList>
            <person name="Dupuis A."/>
            <person name="Darrouzet E."/>
            <person name="Duborjal H."/>
            <person name="Pierrard B."/>
            <person name="Chevallet M."/>
            <person name="van Belzen R."/>
            <person name="Albracht S.P.J."/>
            <person name="Lunardi J."/>
        </authorList>
    </citation>
    <scope>SUBCELLULAR LOCATION IN CHROMATOPHORE</scope>
    <source>
        <strain>ATCC 33303 / B10</strain>
    </source>
</reference>
<reference key="4">
    <citation type="journal article" date="2001" name="Biochim. Biophys. Acta">
        <title>Transmembrane orientation and topology of the NADH:quinone oxidoreductase putative quinone binding subunit NuoH.</title>
        <authorList>
            <person name="Roth R."/>
            <person name="Haegerhaell C."/>
        </authorList>
    </citation>
    <scope>TOPOLOGY</scope>
    <scope>SUBCELLULAR LOCATION</scope>
    <source>
        <strain>ATCC 11166 / DSM 1710 / CCUG 31484 / JCM 21090 / LMG 2962 / NBRC 16435 / NCIMB 8254 / ATH 2.3.1</strain>
    </source>
</reference>
<accession>P42032</accession>
<organism>
    <name type="scientific">Rhodobacter capsulatus</name>
    <name type="common">Rhodopseudomonas capsulata</name>
    <dbReference type="NCBI Taxonomy" id="1061"/>
    <lineage>
        <taxon>Bacteria</taxon>
        <taxon>Pseudomonadati</taxon>
        <taxon>Pseudomonadota</taxon>
        <taxon>Alphaproteobacteria</taxon>
        <taxon>Rhodobacterales</taxon>
        <taxon>Rhodobacter group</taxon>
        <taxon>Rhodobacter</taxon>
    </lineage>
</organism>
<feature type="chain" id="PRO_0000117531" description="NADH-quinone oxidoreductase subunit H">
    <location>
        <begin position="1"/>
        <end position="345"/>
    </location>
</feature>
<feature type="topological domain" description="Lumenal" evidence="2">
    <location>
        <begin position="1"/>
        <end position="15"/>
    </location>
</feature>
<feature type="transmembrane region" description="Helical; Name=1" evidence="5">
    <location>
        <begin position="16"/>
        <end position="35"/>
    </location>
</feature>
<feature type="topological domain" description="Cytoplasmic" evidence="2">
    <location>
        <begin position="36"/>
        <end position="86"/>
    </location>
</feature>
<feature type="transmembrane region" description="Helical; Name=2" evidence="5">
    <location>
        <begin position="87"/>
        <end position="106"/>
    </location>
</feature>
<feature type="topological domain" description="Lumenal" evidence="2">
    <location>
        <begin position="107"/>
        <end position="110"/>
    </location>
</feature>
<feature type="transmembrane region" description="Helical; Name=3" evidence="5">
    <location>
        <begin position="111"/>
        <end position="130"/>
    </location>
</feature>
<feature type="topological domain" description="Cytoplasmic" evidence="2">
    <location>
        <begin position="131"/>
        <end position="156"/>
    </location>
</feature>
<feature type="transmembrane region" description="Helical; Name=4" evidence="5">
    <location>
        <begin position="157"/>
        <end position="176"/>
    </location>
</feature>
<feature type="topological domain" description="Lumenal" evidence="2">
    <location>
        <begin position="177"/>
        <end position="191"/>
    </location>
</feature>
<feature type="transmembrane region" description="Helical; Name=5" evidence="5">
    <location>
        <begin position="192"/>
        <end position="211"/>
    </location>
</feature>
<feature type="topological domain" description="Cytoplasmic" evidence="2">
    <location>
        <begin position="212"/>
        <end position="245"/>
    </location>
</feature>
<feature type="transmembrane region" description="Helical; Name=6" evidence="5">
    <location>
        <begin position="246"/>
        <end position="265"/>
    </location>
</feature>
<feature type="topological domain" description="Lumenal" evidence="2">
    <location>
        <begin position="266"/>
        <end position="276"/>
    </location>
</feature>
<feature type="transmembrane region" description="Helical; Name=7" evidence="5">
    <location>
        <begin position="277"/>
        <end position="296"/>
    </location>
</feature>
<feature type="topological domain" description="Cytoplasmic" evidence="2">
    <location>
        <begin position="297"/>
        <end position="313"/>
    </location>
</feature>
<feature type="transmembrane region" description="Helical; Name=8" evidence="5">
    <location>
        <begin position="314"/>
        <end position="333"/>
    </location>
</feature>
<feature type="topological domain" description="Lumenal" evidence="2">
    <location>
        <begin position="334"/>
        <end position="345"/>
    </location>
</feature>
<name>NUOH_RHOCA</name>
<keyword id="KW-0472">Membrane</keyword>
<keyword id="KW-0520">NAD</keyword>
<keyword id="KW-0874">Quinone</keyword>
<keyword id="KW-1278">Translocase</keyword>
<keyword id="KW-0812">Transmembrane</keyword>
<keyword id="KW-1133">Transmembrane helix</keyword>
<keyword id="KW-0830">Ubiquinone</keyword>